<protein>
    <recommendedName>
        <fullName evidence="7">Bifunctional purine biosynthesis protein ADE16</fullName>
    </recommendedName>
    <domain>
        <recommendedName>
            <fullName evidence="7">Phosphoribosylaminoimidazolecarboxamide formyltransferase</fullName>
            <ecNumber evidence="5">2.1.2.3</ecNumber>
        </recommendedName>
        <alternativeName>
            <fullName evidence="7">5-aminoimidazole-4-carboxamide ribonucleotide formyltransferase</fullName>
        </alternativeName>
        <alternativeName>
            <fullName evidence="6">AICAR transformylase</fullName>
        </alternativeName>
    </domain>
    <domain>
        <recommendedName>
            <fullName evidence="7">Inosine 5'-monophosphate cyclohydrolase</fullName>
            <shortName evidence="6">IMP cyclohydrolase</shortName>
            <ecNumber evidence="5">3.5.4.10</ecNumber>
        </recommendedName>
        <alternativeName>
            <fullName evidence="6">ATIC</fullName>
        </alternativeName>
        <alternativeName>
            <fullName evidence="7">IMP synthase</fullName>
        </alternativeName>
        <alternativeName>
            <fullName evidence="7">Inosinicase</fullName>
        </alternativeName>
    </domain>
</protein>
<comment type="function">
    <text evidence="5">Bifunctional enzyme that catalyzes the last two steps of purine biosynthesis (PubMed:36063996). Acts as a transformylase that incorporates a formyl group to the AMP analog AICAR (5-amino-1-(5-phospho-beta-D-ribosyl)imidazole-4-carboxamide) to produce the intermediate formyl-AICAR (FAICAR) (PubMed:36063996). Also catalyzes the cyclization of FAICAR to IMP (PubMed:36063996).</text>
</comment>
<comment type="catalytic activity">
    <reaction evidence="5">
        <text>(6R)-10-formyltetrahydrofolate + 5-amino-1-(5-phospho-beta-D-ribosyl)imidazole-4-carboxamide = 5-formamido-1-(5-phospho-D-ribosyl)imidazole-4-carboxamide + (6S)-5,6,7,8-tetrahydrofolate</text>
        <dbReference type="Rhea" id="RHEA:22192"/>
        <dbReference type="ChEBI" id="CHEBI:57453"/>
        <dbReference type="ChEBI" id="CHEBI:58467"/>
        <dbReference type="ChEBI" id="CHEBI:58475"/>
        <dbReference type="ChEBI" id="CHEBI:195366"/>
        <dbReference type="EC" id="2.1.2.3"/>
    </reaction>
</comment>
<comment type="catalytic activity">
    <reaction evidence="5">
        <text>IMP + H2O = 5-formamido-1-(5-phospho-D-ribosyl)imidazole-4-carboxamide</text>
        <dbReference type="Rhea" id="RHEA:18445"/>
        <dbReference type="ChEBI" id="CHEBI:15377"/>
        <dbReference type="ChEBI" id="CHEBI:58053"/>
        <dbReference type="ChEBI" id="CHEBI:58467"/>
        <dbReference type="EC" id="3.5.4.10"/>
    </reaction>
</comment>
<comment type="biophysicochemical properties">
    <kinetics>
        <KM evidence="5">130 uM for 5-amino-1-(5-phospho-beta-D-ribosyl)imidazole-4-carboxamide (with (6S)-10-formyltetrahydrofolate as cosubstrate) (at pH 7.5 and 37 degrees Celsius)</KM>
        <KM evidence="5">30 uM for 5-formamido-1-(5-phospho-D-ribosyl)imidazole-4-carboxamide (at pH 7.5 and 37 degrees Celsius)</KM>
        <text evidence="5">kcat is 7.5 sec(-1) with AICAR formyltransferase activity with (6S)-10-formyltetrahydrofolate as substrate (PubMed:36063996). kcat is 7.7 sec(-1) for FAICAR cyclization activity (at pH 7.5 and 37 degrees Celsius) (PubMed:36063996).</text>
    </kinetics>
</comment>
<comment type="pathway">
    <text evidence="5">Purine metabolism; IMP biosynthesis via de novo pathway; 5-formamido-1-(5-phospho-D-ribosyl)imidazole-4-carboxamide from 5-amino-1-(5-phospho-D-ribosyl)imidazole-4-carboxamide (10-formyl THF route): step 1/1.</text>
</comment>
<comment type="pathway">
    <text evidence="5">Purine metabolism; IMP biosynthesis via de novo pathway; IMP from 5-formamido-1-(5-phospho-D-ribosyl)imidazole-4-carboxamide: step 1/1.</text>
</comment>
<comment type="subunit">
    <text evidence="5">Homodimer.</text>
</comment>
<comment type="subcellular location">
    <subcellularLocation>
        <location evidence="3">Cytoplasm</location>
        <location evidence="3">Cytosol</location>
    </subcellularLocation>
</comment>
<comment type="domain">
    <text evidence="2">The IMP cyclohydrolase activity resides in the N-terminal region.</text>
</comment>
<comment type="disruption phenotype">
    <text evidence="5">Histidine and adenine auxotrophy (PubMed:36063996). Decreases capsule size and inhibits the ability of the organism to establish an invasive infection in a murine inhalation model of infection (PubMed:36063996).</text>
</comment>
<comment type="miscellaneous">
    <text evidence="8">Appears to bind 2 Mg(2+); however, it is not clear if binding to magnesium is physiologically relevant. In human, chicken and in some bacteria, ATIC/PURH appears to bind 2 potassium ions.</text>
</comment>
<comment type="similarity">
    <text evidence="7">Belongs to the PurH family.</text>
</comment>
<feature type="chain" id="PRO_0000457176" description="Bifunctional purine biosynthesis protein ADE16">
    <location>
        <begin position="1"/>
        <end position="605"/>
    </location>
</feature>
<feature type="domain" description="MGS-like" evidence="4">
    <location>
        <begin position="1"/>
        <end position="147"/>
    </location>
</feature>
<feature type="active site" description="Proton donor/acceptor; for FAICAR cyclization activity" evidence="2">
    <location>
        <position position="138"/>
    </location>
</feature>
<feature type="active site" description="Proton acceptor; for AICAR formyltransferase activity" evidence="2">
    <location>
        <position position="279"/>
    </location>
</feature>
<feature type="binding site" evidence="2">
    <location>
        <begin position="35"/>
        <end position="38"/>
    </location>
    <ligand>
        <name>IMP</name>
        <dbReference type="ChEBI" id="CHEBI:58053"/>
    </ligand>
</feature>
<feature type="binding site" evidence="2">
    <location>
        <begin position="65"/>
        <end position="68"/>
    </location>
    <ligand>
        <name>IMP</name>
        <dbReference type="ChEBI" id="CHEBI:58053"/>
    </ligand>
</feature>
<feature type="binding site" evidence="2">
    <location>
        <begin position="102"/>
        <end position="103"/>
    </location>
    <ligand>
        <name>IMP</name>
        <dbReference type="ChEBI" id="CHEBI:58053"/>
    </ligand>
</feature>
<feature type="binding site" evidence="2">
    <location>
        <begin position="126"/>
        <end position="127"/>
    </location>
    <ligand>
        <name>IMP</name>
        <dbReference type="ChEBI" id="CHEBI:58053"/>
    </ligand>
</feature>
<feature type="binding site" description="in other chain" evidence="2">
    <location>
        <begin position="219"/>
        <end position="220"/>
    </location>
    <ligand>
        <name>5-amino-1-(5-phospho-beta-D-ribosyl)imidazole-4-carboxamide</name>
        <dbReference type="ChEBI" id="CHEBI:58475"/>
        <note>ligand shared between dimeric partners</note>
    </ligand>
</feature>
<feature type="binding site" description="in other chain" evidence="2">
    <location>
        <position position="279"/>
    </location>
    <ligand>
        <name>5-amino-1-(5-phospho-beta-D-ribosyl)imidazole-4-carboxamide</name>
        <dbReference type="ChEBI" id="CHEBI:58475"/>
        <note>ligand shared between dimeric partners</note>
    </ligand>
</feature>
<feature type="binding site" description="in other chain" evidence="2">
    <location>
        <position position="327"/>
    </location>
    <ligand>
        <name>5-amino-1-(5-phospho-beta-D-ribosyl)imidazole-4-carboxamide</name>
        <dbReference type="ChEBI" id="CHEBI:58475"/>
        <note>ligand shared between dimeric partners</note>
    </ligand>
</feature>
<feature type="binding site" description="in other chain" evidence="2">
    <location>
        <position position="350"/>
    </location>
    <ligand>
        <name>5-amino-1-(5-phospho-beta-D-ribosyl)imidazole-4-carboxamide</name>
        <dbReference type="ChEBI" id="CHEBI:58475"/>
        <note>ligand shared between dimeric partners</note>
    </ligand>
</feature>
<feature type="binding site" evidence="2">
    <location>
        <position position="442"/>
    </location>
    <ligand>
        <name>5-amino-1-(5-phospho-beta-D-ribosyl)imidazole-4-carboxamide</name>
        <dbReference type="ChEBI" id="CHEBI:58475"/>
        <note>ligand shared between dimeric partners</note>
    </ligand>
</feature>
<feature type="binding site" evidence="2">
    <location>
        <position position="462"/>
    </location>
    <ligand>
        <name>5-amino-1-(5-phospho-beta-D-ribosyl)imidazole-4-carboxamide</name>
        <dbReference type="ChEBI" id="CHEBI:58475"/>
        <note>ligand shared between dimeric partners</note>
    </ligand>
</feature>
<feature type="binding site" evidence="1">
    <location>
        <position position="463"/>
    </location>
    <ligand>
        <name>(6R)-10-formyltetrahydrofolate</name>
        <dbReference type="ChEBI" id="CHEBI:195366"/>
    </ligand>
</feature>
<feature type="binding site" evidence="2">
    <location>
        <position position="554"/>
    </location>
    <ligand>
        <name>5-amino-1-(5-phospho-beta-D-ribosyl)imidazole-4-carboxamide</name>
        <dbReference type="ChEBI" id="CHEBI:58475"/>
        <note>ligand shared between dimeric partners</note>
    </ligand>
</feature>
<feature type="binding site" evidence="1">
    <location>
        <position position="559"/>
    </location>
    <ligand>
        <name>(6R)-10-formyltetrahydrofolate</name>
        <dbReference type="ChEBI" id="CHEBI:195366"/>
    </ligand>
</feature>
<feature type="binding site" evidence="2">
    <location>
        <position position="601"/>
    </location>
    <ligand>
        <name>5-amino-1-(5-phospho-beta-D-ribosyl)imidazole-4-carboxamide</name>
        <dbReference type="ChEBI" id="CHEBI:58475"/>
        <note>ligand shared between dimeric partners</note>
    </ligand>
</feature>
<feature type="site" description="Transition state stabilizer" evidence="2">
    <location>
        <position position="278"/>
    </location>
</feature>
<reference evidence="10" key="1">
    <citation type="journal article" date="2014" name="PLoS Genet.">
        <title>Analysis of the genome and transcriptome of Cryptococcus neoformans var. grubii reveals complex RNA expression and microevolution leading to virulence attenuation.</title>
        <authorList>
            <person name="Janbon G."/>
            <person name="Ormerod K.L."/>
            <person name="Paulet D."/>
            <person name="Byrnes E.J. III"/>
            <person name="Yadav V."/>
            <person name="Chatterjee G."/>
            <person name="Mullapudi N."/>
            <person name="Hon C.-C."/>
            <person name="Billmyre R.B."/>
            <person name="Brunel F."/>
            <person name="Bahn Y.-S."/>
            <person name="Chen W."/>
            <person name="Chen Y."/>
            <person name="Chow E.W.L."/>
            <person name="Coppee J.-Y."/>
            <person name="Floyd-Averette A."/>
            <person name="Gaillardin C."/>
            <person name="Gerik K.J."/>
            <person name="Goldberg J."/>
            <person name="Gonzalez-Hilarion S."/>
            <person name="Gujja S."/>
            <person name="Hamlin J.L."/>
            <person name="Hsueh Y.-P."/>
            <person name="Ianiri G."/>
            <person name="Jones S."/>
            <person name="Kodira C.D."/>
            <person name="Kozubowski L."/>
            <person name="Lam W."/>
            <person name="Marra M."/>
            <person name="Mesner L.D."/>
            <person name="Mieczkowski P.A."/>
            <person name="Moyrand F."/>
            <person name="Nielsen K."/>
            <person name="Proux C."/>
            <person name="Rossignol T."/>
            <person name="Schein J.E."/>
            <person name="Sun S."/>
            <person name="Wollschlaeger C."/>
            <person name="Wood I.A."/>
            <person name="Zeng Q."/>
            <person name="Neuveglise C."/>
            <person name="Newlon C.S."/>
            <person name="Perfect J.R."/>
            <person name="Lodge J.K."/>
            <person name="Idnurm A."/>
            <person name="Stajich J.E."/>
            <person name="Kronstad J.W."/>
            <person name="Sanyal K."/>
            <person name="Heitman J."/>
            <person name="Fraser J.A."/>
            <person name="Cuomo C.A."/>
            <person name="Dietrich F.S."/>
        </authorList>
    </citation>
    <scope>NUCLEOTIDE SEQUENCE [LARGE SCALE GENOMIC DNA]</scope>
    <source>
        <strain>H99 / ATCC 208821 / CBS 10515 / FGSC 9487</strain>
    </source>
</reference>
<reference evidence="11" key="2">
    <citation type="journal article" date="2022" name="J. Biol. Chem.">
        <title>AICAR transformylase/IMP cyclohydrolase (ATIC) is essential for de novo purine biosynthesis and infection by Cryptococcus neoformans.</title>
        <authorList>
            <person name="Wizrah M.S.I."/>
            <person name="Chua S.M.H."/>
            <person name="Luo Z."/>
            <person name="Manik M.K."/>
            <person name="Pan M."/>
            <person name="Whyte J.M.L."/>
            <person name="Robertson A.A.B."/>
            <person name="Kappler U."/>
            <person name="Kobe B."/>
            <person name="Fraser J.A."/>
        </authorList>
    </citation>
    <scope>X-RAY CRYSTALLOGRAPHY (2.67 ANGSTROMS) OF 4-605</scope>
    <scope>FUNCTION</scope>
    <scope>CATALYTIC ACTIVITY</scope>
    <scope>BIOPHYSICOCHEMICAL PROPERTIES</scope>
    <scope>PATHWAY</scope>
    <scope>SUBUNIT</scope>
    <scope>DISRUPTION PHENOTYPE</scope>
</reference>
<organism evidence="10">
    <name type="scientific">Cryptococcus neoformans var. grubii serotype A (strain H99 / ATCC 208821 / CBS 10515 / FGSC 9487)</name>
    <name type="common">Filobasidiella neoformans var. grubii</name>
    <dbReference type="NCBI Taxonomy" id="235443"/>
    <lineage>
        <taxon>Eukaryota</taxon>
        <taxon>Fungi</taxon>
        <taxon>Dikarya</taxon>
        <taxon>Basidiomycota</taxon>
        <taxon>Agaricomycotina</taxon>
        <taxon>Tremellomycetes</taxon>
        <taxon>Tremellales</taxon>
        <taxon>Cryptococcaceae</taxon>
        <taxon>Cryptococcus</taxon>
        <taxon>Cryptococcus neoformans species complex</taxon>
    </lineage>
</organism>
<evidence type="ECO:0000250" key="1">
    <source>
        <dbReference type="UniProtKB" id="P31335"/>
    </source>
</evidence>
<evidence type="ECO:0000250" key="2">
    <source>
        <dbReference type="UniProtKB" id="P31939"/>
    </source>
</evidence>
<evidence type="ECO:0000250" key="3">
    <source>
        <dbReference type="UniProtKB" id="P54113"/>
    </source>
</evidence>
<evidence type="ECO:0000255" key="4">
    <source>
        <dbReference type="PROSITE-ProRule" id="PRU01202"/>
    </source>
</evidence>
<evidence type="ECO:0000269" key="5">
    <source>
    </source>
</evidence>
<evidence type="ECO:0000303" key="6">
    <source>
    </source>
</evidence>
<evidence type="ECO:0000305" key="7"/>
<evidence type="ECO:0000305" key="8">
    <source>
    </source>
</evidence>
<evidence type="ECO:0000312" key="9">
    <source>
        <dbReference type="EMBL" id="AFR92829.1"/>
    </source>
</evidence>
<evidence type="ECO:0000312" key="10">
    <source>
        <dbReference type="Proteomes" id="UP000010091"/>
    </source>
</evidence>
<evidence type="ECO:0007744" key="11">
    <source>
        <dbReference type="PDB" id="7MGQ"/>
    </source>
</evidence>
<name>PUR9_CRYNH</name>
<proteinExistence type="evidence at protein level"/>
<dbReference type="EC" id="2.1.2.3" evidence="5"/>
<dbReference type="EC" id="3.5.4.10" evidence="5"/>
<dbReference type="EMBL" id="CP003820">
    <property type="protein sequence ID" value="AFR92829.1"/>
    <property type="molecule type" value="Genomic_DNA"/>
</dbReference>
<dbReference type="RefSeq" id="XP_012046900.1">
    <property type="nucleotide sequence ID" value="XM_012191510.1"/>
</dbReference>
<dbReference type="PDB" id="7MGQ">
    <property type="method" value="X-ray"/>
    <property type="resolution" value="2.67 A"/>
    <property type="chains" value="A/B/C/D=4-605"/>
</dbReference>
<dbReference type="PDBsum" id="7MGQ"/>
<dbReference type="SMR" id="J9VJP1"/>
<dbReference type="GeneID" id="23884482"/>
<dbReference type="KEGG" id="cng:CNAG_00700"/>
<dbReference type="VEuPathDB" id="FungiDB:CNAG_00700"/>
<dbReference type="HOGENOM" id="CLU_016316_3_2_1"/>
<dbReference type="OrthoDB" id="665at5206"/>
<dbReference type="UniPathway" id="UPA00074">
    <property type="reaction ID" value="UER00133"/>
</dbReference>
<dbReference type="UniPathway" id="UPA00074">
    <property type="reaction ID" value="UER00135"/>
</dbReference>
<dbReference type="Proteomes" id="UP000010091">
    <property type="component" value="Chromosome 1"/>
</dbReference>
<dbReference type="GO" id="GO:0005829">
    <property type="term" value="C:cytosol"/>
    <property type="evidence" value="ECO:0007669"/>
    <property type="project" value="UniProtKB-SubCell"/>
</dbReference>
<dbReference type="GO" id="GO:0003937">
    <property type="term" value="F:IMP cyclohydrolase activity"/>
    <property type="evidence" value="ECO:0000314"/>
    <property type="project" value="UniProtKB"/>
</dbReference>
<dbReference type="GO" id="GO:0004643">
    <property type="term" value="F:phosphoribosylaminoimidazolecarboxamide formyltransferase activity"/>
    <property type="evidence" value="ECO:0000314"/>
    <property type="project" value="UniProtKB"/>
</dbReference>
<dbReference type="GO" id="GO:0006189">
    <property type="term" value="P:'de novo' IMP biosynthetic process"/>
    <property type="evidence" value="ECO:0000314"/>
    <property type="project" value="UniProtKB"/>
</dbReference>
<dbReference type="CDD" id="cd01421">
    <property type="entry name" value="IMPCH"/>
    <property type="match status" value="1"/>
</dbReference>
<dbReference type="FunFam" id="3.40.140.20:FF:000003">
    <property type="entry name" value="Bifunctional purine biosynthesis protein"/>
    <property type="match status" value="1"/>
</dbReference>
<dbReference type="FunFam" id="3.40.50.1380:FF:000003">
    <property type="entry name" value="Bifunctional purine biosynthesis protein"/>
    <property type="match status" value="1"/>
</dbReference>
<dbReference type="FunFam" id="1.10.287.440:FF:000001">
    <property type="entry name" value="Bifunctional purine biosynthesis protein PURH"/>
    <property type="match status" value="1"/>
</dbReference>
<dbReference type="Gene3D" id="1.10.287.440">
    <property type="match status" value="1"/>
</dbReference>
<dbReference type="Gene3D" id="3.40.140.20">
    <property type="match status" value="2"/>
</dbReference>
<dbReference type="Gene3D" id="3.40.50.1380">
    <property type="entry name" value="Methylglyoxal synthase-like domain"/>
    <property type="match status" value="1"/>
</dbReference>
<dbReference type="HAMAP" id="MF_00139">
    <property type="entry name" value="PurH"/>
    <property type="match status" value="1"/>
</dbReference>
<dbReference type="InterPro" id="IPR024051">
    <property type="entry name" value="AICAR_Tfase_dup_dom_sf"/>
</dbReference>
<dbReference type="InterPro" id="IPR024050">
    <property type="entry name" value="AICAR_Tfase_insert_dom_sf"/>
</dbReference>
<dbReference type="InterPro" id="IPR016193">
    <property type="entry name" value="Cytidine_deaminase-like"/>
</dbReference>
<dbReference type="InterPro" id="IPR011607">
    <property type="entry name" value="MGS-like_dom"/>
</dbReference>
<dbReference type="InterPro" id="IPR036914">
    <property type="entry name" value="MGS-like_dom_sf"/>
</dbReference>
<dbReference type="InterPro" id="IPR002695">
    <property type="entry name" value="PurH-like"/>
</dbReference>
<dbReference type="NCBIfam" id="NF005492">
    <property type="entry name" value="PRK07106.1"/>
    <property type="match status" value="1"/>
</dbReference>
<dbReference type="NCBIfam" id="TIGR00355">
    <property type="entry name" value="purH"/>
    <property type="match status" value="1"/>
</dbReference>
<dbReference type="PANTHER" id="PTHR11692:SF0">
    <property type="entry name" value="BIFUNCTIONAL PURINE BIOSYNTHESIS PROTEIN ATIC"/>
    <property type="match status" value="1"/>
</dbReference>
<dbReference type="PANTHER" id="PTHR11692">
    <property type="entry name" value="BIFUNCTIONAL PURINE BIOSYNTHESIS PROTEIN PURH"/>
    <property type="match status" value="1"/>
</dbReference>
<dbReference type="Pfam" id="PF01808">
    <property type="entry name" value="AICARFT_IMPCHas"/>
    <property type="match status" value="1"/>
</dbReference>
<dbReference type="Pfam" id="PF02142">
    <property type="entry name" value="MGS"/>
    <property type="match status" value="1"/>
</dbReference>
<dbReference type="PIRSF" id="PIRSF000414">
    <property type="entry name" value="AICARFT_IMPCHas"/>
    <property type="match status" value="1"/>
</dbReference>
<dbReference type="SMART" id="SM00798">
    <property type="entry name" value="AICARFT_IMPCHas"/>
    <property type="match status" value="1"/>
</dbReference>
<dbReference type="SMART" id="SM00851">
    <property type="entry name" value="MGS"/>
    <property type="match status" value="1"/>
</dbReference>
<dbReference type="SUPFAM" id="SSF53927">
    <property type="entry name" value="Cytidine deaminase-like"/>
    <property type="match status" value="1"/>
</dbReference>
<dbReference type="SUPFAM" id="SSF52335">
    <property type="entry name" value="Methylglyoxal synthase-like"/>
    <property type="match status" value="1"/>
</dbReference>
<dbReference type="PROSITE" id="PS51855">
    <property type="entry name" value="MGS"/>
    <property type="match status" value="1"/>
</dbReference>
<gene>
    <name evidence="6" type="primary">ADE16</name>
    <name evidence="9" type="ORF">CNAG_00700</name>
</gene>
<sequence length="605" mass="65399">MSSEAPIALLSVYDKTGLLPFAKSLKELGFRLLGSGGTAKMIREAGMEIEDVSNITKAPEMLGGRVKTLHPAVHGGILSRDIPSDLADLATNKISPITLVVCNLYPFVLQTAKPDCTLAGAIEEIDIGGVTLLRAAAKNHGRVSIISSPSDYETIVAELRAKGEVSAETRRGLAIKAFEDTKSYDEAISDYFRKVYATPGVEEEMKAGAGVGYQRLGLRYGANPHQKPAQAFVEQGEMPIKVLSGSPGYINLLDALNSWALVKELAAGLDLPAAASFKHVSPAGAAVGLPLDERAAKVFGVEDLKELSPLACAYARARGADRMSSFGDFIALSHTVDTPTAKIISREVSDGVIAPGYEPEALEILSKKKGGKYCVLQMDPTYVPPEIETRQVYGISLQQKRNDCKIDESLFKNVVTANKDLPKSAVTDLVVATLALKYTQSNSVCYALNGTVIGLGAGQQSRIHCTRLAGDKADNWWLRHHPRVLELPFKKGTKRADKANAIDLFVTGQAFEAEGGERAQWESLFETVPEPLTKEEREKHMKELTGVACASDAFFPFPDNVHRAKRSGATYLAAPSGSIMDKECIKAADESNLVFCHTDLRLFHH</sequence>
<keyword id="KW-0002">3D-structure</keyword>
<keyword id="KW-0963">Cytoplasm</keyword>
<keyword id="KW-0378">Hydrolase</keyword>
<keyword id="KW-0511">Multifunctional enzyme</keyword>
<keyword id="KW-0658">Purine biosynthesis</keyword>
<keyword id="KW-0808">Transferase</keyword>
<accession>J9VJP1</accession>